<proteinExistence type="inferred from homology"/>
<comment type="function">
    <text evidence="1">Catalyzes the decarboxylation of 3-octaprenyl-4-hydroxy benzoate to 2-octaprenylphenol, an intermediate step in ubiquinone biosynthesis.</text>
</comment>
<comment type="catalytic activity">
    <reaction evidence="1">
        <text>a 4-hydroxy-3-(all-trans-polyprenyl)benzoate + H(+) = a 2-(all-trans-polyprenyl)phenol + CO2</text>
        <dbReference type="Rhea" id="RHEA:41680"/>
        <dbReference type="Rhea" id="RHEA-COMP:9514"/>
        <dbReference type="Rhea" id="RHEA-COMP:9516"/>
        <dbReference type="ChEBI" id="CHEBI:1269"/>
        <dbReference type="ChEBI" id="CHEBI:15378"/>
        <dbReference type="ChEBI" id="CHEBI:16526"/>
        <dbReference type="ChEBI" id="CHEBI:78396"/>
        <dbReference type="EC" id="4.1.1.98"/>
    </reaction>
</comment>
<comment type="cofactor">
    <cofactor evidence="1">
        <name>prenylated FMN</name>
        <dbReference type="ChEBI" id="CHEBI:87746"/>
    </cofactor>
    <text evidence="1">Binds 1 prenylated FMN per subunit.</text>
</comment>
<comment type="cofactor">
    <cofactor evidence="1">
        <name>Mn(2+)</name>
        <dbReference type="ChEBI" id="CHEBI:29035"/>
    </cofactor>
</comment>
<comment type="pathway">
    <text evidence="1">Cofactor biosynthesis; ubiquinone biosynthesis.</text>
</comment>
<comment type="subunit">
    <text evidence="1">Homohexamer.</text>
</comment>
<comment type="subcellular location">
    <subcellularLocation>
        <location evidence="1">Cell membrane</location>
        <topology evidence="1">Peripheral membrane protein</topology>
    </subcellularLocation>
</comment>
<comment type="similarity">
    <text evidence="1">Belongs to the UbiD family.</text>
</comment>
<keyword id="KW-1003">Cell membrane</keyword>
<keyword id="KW-0210">Decarboxylase</keyword>
<keyword id="KW-0285">Flavoprotein</keyword>
<keyword id="KW-0288">FMN</keyword>
<keyword id="KW-0456">Lyase</keyword>
<keyword id="KW-0464">Manganese</keyword>
<keyword id="KW-0472">Membrane</keyword>
<keyword id="KW-0479">Metal-binding</keyword>
<keyword id="KW-1185">Reference proteome</keyword>
<keyword id="KW-0831">Ubiquinone biosynthesis</keyword>
<gene>
    <name evidence="1" type="primary">ubiD</name>
    <name type="ordered locus">ABO_2465</name>
</gene>
<dbReference type="EC" id="4.1.1.98" evidence="1"/>
<dbReference type="EMBL" id="AM286690">
    <property type="protein sequence ID" value="CAL17913.1"/>
    <property type="molecule type" value="Genomic_DNA"/>
</dbReference>
<dbReference type="RefSeq" id="WP_011589738.1">
    <property type="nucleotide sequence ID" value="NC_008260.1"/>
</dbReference>
<dbReference type="SMR" id="Q0VLN5"/>
<dbReference type="STRING" id="393595.ABO_2465"/>
<dbReference type="KEGG" id="abo:ABO_2465"/>
<dbReference type="eggNOG" id="COG0043">
    <property type="taxonomic scope" value="Bacteria"/>
</dbReference>
<dbReference type="HOGENOM" id="CLU_023348_4_1_6"/>
<dbReference type="OrthoDB" id="9809841at2"/>
<dbReference type="UniPathway" id="UPA00232"/>
<dbReference type="Proteomes" id="UP000008871">
    <property type="component" value="Chromosome"/>
</dbReference>
<dbReference type="GO" id="GO:0005829">
    <property type="term" value="C:cytosol"/>
    <property type="evidence" value="ECO:0007669"/>
    <property type="project" value="TreeGrafter"/>
</dbReference>
<dbReference type="GO" id="GO:0005886">
    <property type="term" value="C:plasma membrane"/>
    <property type="evidence" value="ECO:0007669"/>
    <property type="project" value="UniProtKB-SubCell"/>
</dbReference>
<dbReference type="GO" id="GO:0008694">
    <property type="term" value="F:3-octaprenyl-4-hydroxybenzoate carboxy-lyase activity"/>
    <property type="evidence" value="ECO:0007669"/>
    <property type="project" value="UniProtKB-UniRule"/>
</dbReference>
<dbReference type="GO" id="GO:0046872">
    <property type="term" value="F:metal ion binding"/>
    <property type="evidence" value="ECO:0007669"/>
    <property type="project" value="UniProtKB-KW"/>
</dbReference>
<dbReference type="GO" id="GO:0006744">
    <property type="term" value="P:ubiquinone biosynthetic process"/>
    <property type="evidence" value="ECO:0007669"/>
    <property type="project" value="UniProtKB-UniRule"/>
</dbReference>
<dbReference type="FunFam" id="1.20.5.570:FF:000001">
    <property type="entry name" value="3-octaprenyl-4-hydroxybenzoate carboxy-lyase"/>
    <property type="match status" value="1"/>
</dbReference>
<dbReference type="FunFam" id="3.40.1670.10:FF:000001">
    <property type="entry name" value="3-octaprenyl-4-hydroxybenzoate carboxy-lyase"/>
    <property type="match status" value="1"/>
</dbReference>
<dbReference type="Gene3D" id="1.20.5.570">
    <property type="entry name" value="Single helix bin"/>
    <property type="match status" value="1"/>
</dbReference>
<dbReference type="Gene3D" id="3.40.1670.10">
    <property type="entry name" value="UbiD C-terminal domain-like"/>
    <property type="match status" value="1"/>
</dbReference>
<dbReference type="HAMAP" id="MF_01636">
    <property type="entry name" value="UbiD"/>
    <property type="match status" value="1"/>
</dbReference>
<dbReference type="InterPro" id="IPR002830">
    <property type="entry name" value="UbiD"/>
</dbReference>
<dbReference type="InterPro" id="IPR049381">
    <property type="entry name" value="UbiD-like_C"/>
</dbReference>
<dbReference type="InterPro" id="IPR049383">
    <property type="entry name" value="UbiD-like_N"/>
</dbReference>
<dbReference type="InterPro" id="IPR023677">
    <property type="entry name" value="UbiD_bacteria"/>
</dbReference>
<dbReference type="InterPro" id="IPR048304">
    <property type="entry name" value="UbiD_Rift_dom"/>
</dbReference>
<dbReference type="NCBIfam" id="NF008175">
    <property type="entry name" value="PRK10922.1"/>
    <property type="match status" value="1"/>
</dbReference>
<dbReference type="NCBIfam" id="TIGR00148">
    <property type="entry name" value="UbiD family decarboxylase"/>
    <property type="match status" value="1"/>
</dbReference>
<dbReference type="PANTHER" id="PTHR30108">
    <property type="entry name" value="3-OCTAPRENYL-4-HYDROXYBENZOATE CARBOXY-LYASE-RELATED"/>
    <property type="match status" value="1"/>
</dbReference>
<dbReference type="PANTHER" id="PTHR30108:SF17">
    <property type="entry name" value="FERULIC ACID DECARBOXYLASE 1"/>
    <property type="match status" value="1"/>
</dbReference>
<dbReference type="Pfam" id="PF01977">
    <property type="entry name" value="UbiD"/>
    <property type="match status" value="1"/>
</dbReference>
<dbReference type="Pfam" id="PF20696">
    <property type="entry name" value="UbiD_C"/>
    <property type="match status" value="1"/>
</dbReference>
<dbReference type="Pfam" id="PF20695">
    <property type="entry name" value="UbiD_N"/>
    <property type="match status" value="1"/>
</dbReference>
<dbReference type="SUPFAM" id="SSF50475">
    <property type="entry name" value="FMN-binding split barrel"/>
    <property type="match status" value="1"/>
</dbReference>
<dbReference type="SUPFAM" id="SSF143968">
    <property type="entry name" value="UbiD C-terminal domain-like"/>
    <property type="match status" value="1"/>
</dbReference>
<accession>Q0VLN5</accession>
<protein>
    <recommendedName>
        <fullName evidence="1">3-octaprenyl-4-hydroxybenzoate carboxy-lyase</fullName>
        <ecNumber evidence="1">4.1.1.98</ecNumber>
    </recommendedName>
    <alternativeName>
        <fullName evidence="1">Polyprenyl p-hydroxybenzoate decarboxylase</fullName>
    </alternativeName>
</protein>
<evidence type="ECO:0000255" key="1">
    <source>
        <dbReference type="HAMAP-Rule" id="MF_01636"/>
    </source>
</evidence>
<sequence length="491" mass="55225">MKYRDLRDFISQLEQLGELKRITVPVDPKLEMTEICDRTLRAGGPALLFENPVGFGTPVLGNLFGTERRVALGMGRDSVAELRELGELLAFLKEPEPPKGFRDAWEKLPVFRKVLSMSPKVSSSGPCQEKVLEGDEVDLYKLPIQTCWPDDAGPLVTWPLVITRGPNKERQNLGIYRQQLIGRNKLIMRWLSHRGGALDFQEWQQQHPGEPFPVSVALGADPATILGAVTPVPDTLSEYAFAGLLRGSKTELVKCIGNDLQVPASAEFVLEGFLYPGDMADEGPFGDHTGYYNEVERFPVFTVERITHRRNPIYHSTYTGRPPDEPAVLGVAMNEIFVPILKKQFPEIVDFYLPPEGCSYRMAVVTMKKQYPGHAKRVMMGVWSFLRQFMYTKFVIVCDDDVNARDWKDVIWAMTTRMDPARDTVMIENTPIDYLDFASPVAGLGSKMGMDATNKWAGETTREWGRAIAMDPAVKTRVDEMWSSLGIDTPE</sequence>
<reference key="1">
    <citation type="journal article" date="2006" name="Nat. Biotechnol.">
        <title>Genome sequence of the ubiquitous hydrocarbon-degrading marine bacterium Alcanivorax borkumensis.</title>
        <authorList>
            <person name="Schneiker S."/>
            <person name="Martins dos Santos V.A.P."/>
            <person name="Bartels D."/>
            <person name="Bekel T."/>
            <person name="Brecht M."/>
            <person name="Buhrmester J."/>
            <person name="Chernikova T.N."/>
            <person name="Denaro R."/>
            <person name="Ferrer M."/>
            <person name="Gertler C."/>
            <person name="Goesmann A."/>
            <person name="Golyshina O.V."/>
            <person name="Kaminski F."/>
            <person name="Khachane A.N."/>
            <person name="Lang S."/>
            <person name="Linke B."/>
            <person name="McHardy A.C."/>
            <person name="Meyer F."/>
            <person name="Nechitaylo T."/>
            <person name="Puehler A."/>
            <person name="Regenhardt D."/>
            <person name="Rupp O."/>
            <person name="Sabirova J.S."/>
            <person name="Selbitschka W."/>
            <person name="Yakimov M.M."/>
            <person name="Timmis K.N."/>
            <person name="Vorhoelter F.-J."/>
            <person name="Weidner S."/>
            <person name="Kaiser O."/>
            <person name="Golyshin P.N."/>
        </authorList>
    </citation>
    <scope>NUCLEOTIDE SEQUENCE [LARGE SCALE GENOMIC DNA]</scope>
    <source>
        <strain>ATCC 700651 / DSM 11573 / NCIMB 13689 / SK2</strain>
    </source>
</reference>
<organism>
    <name type="scientific">Alcanivorax borkumensis (strain ATCC 700651 / DSM 11573 / NCIMB 13689 / SK2)</name>
    <dbReference type="NCBI Taxonomy" id="393595"/>
    <lineage>
        <taxon>Bacteria</taxon>
        <taxon>Pseudomonadati</taxon>
        <taxon>Pseudomonadota</taxon>
        <taxon>Gammaproteobacteria</taxon>
        <taxon>Oceanospirillales</taxon>
        <taxon>Alcanivoracaceae</taxon>
        <taxon>Alcanivorax</taxon>
    </lineage>
</organism>
<name>UBID_ALCBS</name>
<feature type="chain" id="PRO_0000267644" description="3-octaprenyl-4-hydroxybenzoate carboxy-lyase">
    <location>
        <begin position="1"/>
        <end position="491"/>
    </location>
</feature>
<feature type="active site" description="Proton donor" evidence="1">
    <location>
        <position position="287"/>
    </location>
</feature>
<feature type="binding site" evidence="1">
    <location>
        <position position="172"/>
    </location>
    <ligand>
        <name>Mn(2+)</name>
        <dbReference type="ChEBI" id="CHEBI:29035"/>
    </ligand>
</feature>
<feature type="binding site" evidence="1">
    <location>
        <begin position="175"/>
        <end position="177"/>
    </location>
    <ligand>
        <name>prenylated FMN</name>
        <dbReference type="ChEBI" id="CHEBI:87746"/>
    </ligand>
</feature>
<feature type="binding site" evidence="1">
    <location>
        <begin position="189"/>
        <end position="191"/>
    </location>
    <ligand>
        <name>prenylated FMN</name>
        <dbReference type="ChEBI" id="CHEBI:87746"/>
    </ligand>
</feature>
<feature type="binding site" evidence="1">
    <location>
        <begin position="194"/>
        <end position="195"/>
    </location>
    <ligand>
        <name>prenylated FMN</name>
        <dbReference type="ChEBI" id="CHEBI:87746"/>
    </ligand>
</feature>
<feature type="binding site" evidence="1">
    <location>
        <position position="238"/>
    </location>
    <ligand>
        <name>Mn(2+)</name>
        <dbReference type="ChEBI" id="CHEBI:29035"/>
    </ligand>
</feature>